<keyword id="KW-0249">Electron transport</keyword>
<keyword id="KW-0408">Iron</keyword>
<keyword id="KW-0479">Metal-binding</keyword>
<keyword id="KW-0614">Plasmid</keyword>
<keyword id="KW-1185">Reference proteome</keyword>
<keyword id="KW-0813">Transport</keyword>
<organism>
    <name type="scientific">Cupriavidus necator (strain ATCC 17699 / DSM 428 / KCTC 22496 / NCIMB 10442 / H16 / Stanier 337)</name>
    <name type="common">Ralstonia eutropha</name>
    <dbReference type="NCBI Taxonomy" id="381666"/>
    <lineage>
        <taxon>Bacteria</taxon>
        <taxon>Pseudomonadati</taxon>
        <taxon>Pseudomonadota</taxon>
        <taxon>Betaproteobacteria</taxon>
        <taxon>Burkholderiales</taxon>
        <taxon>Burkholderiaceae</taxon>
        <taxon>Cupriavidus</taxon>
    </lineage>
</organism>
<protein>
    <recommendedName>
        <fullName>Rubredoxin</fullName>
        <shortName>Rd</shortName>
    </recommendedName>
</protein>
<accession>P31912</accession>
<comment type="function">
    <text>Rubredoxin is a small nonheme, iron protein lacking acid-labile sulfide. Its single Fe, chelated to 4 Cys, functions as an electron acceptor and may also stabilize the conformation of the molecule. Could be involved in hydrogenase-linked redox processes.</text>
</comment>
<comment type="cofactor">
    <cofactor evidence="2">
        <name>Fe(3+)</name>
        <dbReference type="ChEBI" id="CHEBI:29034"/>
    </cofactor>
    <text evidence="2">Binds 1 Fe(3+) ion per subunit.</text>
</comment>
<comment type="similarity">
    <text evidence="2">Belongs to the rubredoxin family.</text>
</comment>
<reference key="1">
    <citation type="journal article" date="1992" name="J. Bacteriol.">
        <title>A gene complex coding for the membrane-bound hydrogenase of Alcaligenes eutrophus H16.</title>
        <authorList>
            <person name="Kortlueke C."/>
            <person name="Horstmann K."/>
            <person name="Schwartz E."/>
            <person name="Rohde M."/>
            <person name="Binsack R."/>
            <person name="Friedrich B."/>
        </authorList>
    </citation>
    <scope>NUCLEOTIDE SEQUENCE [GENOMIC DNA]</scope>
</reference>
<reference key="2">
    <citation type="journal article" date="2003" name="J. Mol. Biol.">
        <title>Complete nucleotide sequence of pHG1: a Ralstonia eutropha H16 megaplasmid encoding key enzymes of H(2)-based lithoautotrophy and anaerobiosis.</title>
        <authorList>
            <person name="Schwartz E."/>
            <person name="Henne A."/>
            <person name="Cramm R."/>
            <person name="Eitinger T."/>
            <person name="Friedrich B."/>
            <person name="Gottschalk G."/>
        </authorList>
    </citation>
    <scope>NUCLEOTIDE SEQUENCE [LARGE SCALE GENOMIC DNA]</scope>
    <source>
        <strain>ATCC 17699 / DSM 428 / KCTC 22496 / NCIMB 10442 / H16 / Stanier 337</strain>
    </source>
</reference>
<geneLocation type="plasmid">
    <name>megaplasmid pHG1</name>
</geneLocation>
<feature type="chain" id="PRO_0000135022" description="Rubredoxin">
    <location>
        <begin position="1"/>
        <end position="78"/>
    </location>
</feature>
<feature type="domain" description="Rubredoxin-like" evidence="1">
    <location>
        <begin position="23"/>
        <end position="74"/>
    </location>
</feature>
<feature type="binding site" evidence="1">
    <location>
        <position position="28"/>
    </location>
    <ligand>
        <name>Fe cation</name>
        <dbReference type="ChEBI" id="CHEBI:24875"/>
    </ligand>
</feature>
<feature type="binding site" evidence="1">
    <location>
        <position position="31"/>
    </location>
    <ligand>
        <name>Fe cation</name>
        <dbReference type="ChEBI" id="CHEBI:24875"/>
    </ligand>
</feature>
<feature type="binding site" evidence="1">
    <location>
        <position position="61"/>
    </location>
    <ligand>
        <name>Fe cation</name>
        <dbReference type="ChEBI" id="CHEBI:24875"/>
    </ligand>
</feature>
<feature type="binding site" evidence="1">
    <location>
        <position position="64"/>
    </location>
    <ligand>
        <name>Fe cation</name>
        <dbReference type="ChEBI" id="CHEBI:24875"/>
    </ligand>
</feature>
<name>RUBR_CUPNH</name>
<dbReference type="EMBL" id="M96433">
    <property type="protein sequence ID" value="AAA16469.1"/>
    <property type="molecule type" value="Unassigned_DNA"/>
</dbReference>
<dbReference type="EMBL" id="AY305378">
    <property type="protein sequence ID" value="AAP85765.1"/>
    <property type="molecule type" value="Genomic_DNA"/>
</dbReference>
<dbReference type="PIR" id="I43255">
    <property type="entry name" value="I43255"/>
</dbReference>
<dbReference type="RefSeq" id="WP_011153934.1">
    <property type="nucleotide sequence ID" value="NC_005241.1"/>
</dbReference>
<dbReference type="SMR" id="P31912"/>
<dbReference type="KEGG" id="reh:PHG009"/>
<dbReference type="eggNOG" id="COG1773">
    <property type="taxonomic scope" value="Bacteria"/>
</dbReference>
<dbReference type="HOGENOM" id="CLU_128747_2_1_4"/>
<dbReference type="OrthoDB" id="9800607at2"/>
<dbReference type="Proteomes" id="UP000008210">
    <property type="component" value="Plasmid megaplasmid pHG1"/>
</dbReference>
<dbReference type="GO" id="GO:0009055">
    <property type="term" value="F:electron transfer activity"/>
    <property type="evidence" value="ECO:0007669"/>
    <property type="project" value="TreeGrafter"/>
</dbReference>
<dbReference type="GO" id="GO:0005506">
    <property type="term" value="F:iron ion binding"/>
    <property type="evidence" value="ECO:0007669"/>
    <property type="project" value="InterPro"/>
</dbReference>
<dbReference type="GO" id="GO:0043448">
    <property type="term" value="P:alkane catabolic process"/>
    <property type="evidence" value="ECO:0007669"/>
    <property type="project" value="TreeGrafter"/>
</dbReference>
<dbReference type="CDD" id="cd00730">
    <property type="entry name" value="rubredoxin"/>
    <property type="match status" value="1"/>
</dbReference>
<dbReference type="Gene3D" id="2.20.28.10">
    <property type="match status" value="1"/>
</dbReference>
<dbReference type="InterPro" id="IPR024934">
    <property type="entry name" value="Rubredoxin-like_dom"/>
</dbReference>
<dbReference type="InterPro" id="IPR024935">
    <property type="entry name" value="Rubredoxin_dom"/>
</dbReference>
<dbReference type="InterPro" id="IPR050526">
    <property type="entry name" value="Rubredoxin_ET"/>
</dbReference>
<dbReference type="InterPro" id="IPR018527">
    <property type="entry name" value="Rubredoxin_Fe_BS"/>
</dbReference>
<dbReference type="PANTHER" id="PTHR47627">
    <property type="entry name" value="RUBREDOXIN"/>
    <property type="match status" value="1"/>
</dbReference>
<dbReference type="PANTHER" id="PTHR47627:SF1">
    <property type="entry name" value="RUBREDOXIN-1-RELATED"/>
    <property type="match status" value="1"/>
</dbReference>
<dbReference type="Pfam" id="PF00301">
    <property type="entry name" value="Rubredoxin"/>
    <property type="match status" value="1"/>
</dbReference>
<dbReference type="PRINTS" id="PR00163">
    <property type="entry name" value="RUBREDOXIN"/>
</dbReference>
<dbReference type="SUPFAM" id="SSF57802">
    <property type="entry name" value="Rubredoxin-like"/>
    <property type="match status" value="1"/>
</dbReference>
<dbReference type="PROSITE" id="PS00202">
    <property type="entry name" value="RUBREDOXIN"/>
    <property type="match status" value="1"/>
</dbReference>
<dbReference type="PROSITE" id="PS50903">
    <property type="entry name" value="RUBREDOXIN_LIKE"/>
    <property type="match status" value="1"/>
</dbReference>
<sequence length="78" mass="8649">MNDAGMGRFEGSYLGDRGRLAADARLECKICWWEYDPEVGDPVWQIAPGTSFSALPAHWRCPNCDGEAEQFMVLGPQA</sequence>
<gene>
    <name type="primary">hoxR</name>
    <name type="ordered locus">PHG009</name>
</gene>
<proteinExistence type="inferred from homology"/>
<evidence type="ECO:0000255" key="1">
    <source>
        <dbReference type="PROSITE-ProRule" id="PRU00241"/>
    </source>
</evidence>
<evidence type="ECO:0000305" key="2"/>